<evidence type="ECO:0000255" key="1">
    <source>
        <dbReference type="HAMAP-Rule" id="MF_00303"/>
    </source>
</evidence>
<dbReference type="EC" id="5.2.1.8" evidence="1"/>
<dbReference type="EMBL" id="CP000922">
    <property type="protein sequence ID" value="ACJ32980.1"/>
    <property type="molecule type" value="Genomic_DNA"/>
</dbReference>
<dbReference type="RefSeq" id="WP_012574287.1">
    <property type="nucleotide sequence ID" value="NC_011567.1"/>
</dbReference>
<dbReference type="SMR" id="B7GH24"/>
<dbReference type="STRING" id="491915.Aflv_0599"/>
<dbReference type="GeneID" id="7036856"/>
<dbReference type="KEGG" id="afl:Aflv_0599"/>
<dbReference type="PATRIC" id="fig|491915.6.peg.616"/>
<dbReference type="eggNOG" id="COG0544">
    <property type="taxonomic scope" value="Bacteria"/>
</dbReference>
<dbReference type="HOGENOM" id="CLU_033058_3_2_9"/>
<dbReference type="Proteomes" id="UP000000742">
    <property type="component" value="Chromosome"/>
</dbReference>
<dbReference type="GO" id="GO:0005737">
    <property type="term" value="C:cytoplasm"/>
    <property type="evidence" value="ECO:0007669"/>
    <property type="project" value="UniProtKB-SubCell"/>
</dbReference>
<dbReference type="GO" id="GO:0003755">
    <property type="term" value="F:peptidyl-prolyl cis-trans isomerase activity"/>
    <property type="evidence" value="ECO:0007669"/>
    <property type="project" value="UniProtKB-UniRule"/>
</dbReference>
<dbReference type="GO" id="GO:0044183">
    <property type="term" value="F:protein folding chaperone"/>
    <property type="evidence" value="ECO:0007669"/>
    <property type="project" value="TreeGrafter"/>
</dbReference>
<dbReference type="GO" id="GO:0043022">
    <property type="term" value="F:ribosome binding"/>
    <property type="evidence" value="ECO:0007669"/>
    <property type="project" value="TreeGrafter"/>
</dbReference>
<dbReference type="GO" id="GO:0051083">
    <property type="term" value="P:'de novo' cotranslational protein folding"/>
    <property type="evidence" value="ECO:0007669"/>
    <property type="project" value="TreeGrafter"/>
</dbReference>
<dbReference type="GO" id="GO:0051301">
    <property type="term" value="P:cell division"/>
    <property type="evidence" value="ECO:0007669"/>
    <property type="project" value="UniProtKB-KW"/>
</dbReference>
<dbReference type="GO" id="GO:0061077">
    <property type="term" value="P:chaperone-mediated protein folding"/>
    <property type="evidence" value="ECO:0007669"/>
    <property type="project" value="TreeGrafter"/>
</dbReference>
<dbReference type="GO" id="GO:0015031">
    <property type="term" value="P:protein transport"/>
    <property type="evidence" value="ECO:0007669"/>
    <property type="project" value="UniProtKB-UniRule"/>
</dbReference>
<dbReference type="GO" id="GO:0043335">
    <property type="term" value="P:protein unfolding"/>
    <property type="evidence" value="ECO:0007669"/>
    <property type="project" value="TreeGrafter"/>
</dbReference>
<dbReference type="FunFam" id="3.10.50.40:FF:000001">
    <property type="entry name" value="Trigger factor"/>
    <property type="match status" value="1"/>
</dbReference>
<dbReference type="FunFam" id="3.30.70.1050:FF:000002">
    <property type="entry name" value="Trigger factor"/>
    <property type="match status" value="1"/>
</dbReference>
<dbReference type="Gene3D" id="3.10.50.40">
    <property type="match status" value="1"/>
</dbReference>
<dbReference type="Gene3D" id="3.30.70.1050">
    <property type="entry name" value="Trigger factor ribosome-binding domain"/>
    <property type="match status" value="1"/>
</dbReference>
<dbReference type="Gene3D" id="1.10.3120.10">
    <property type="entry name" value="Trigger factor, C-terminal domain"/>
    <property type="match status" value="1"/>
</dbReference>
<dbReference type="HAMAP" id="MF_00303">
    <property type="entry name" value="Trigger_factor_Tig"/>
    <property type="match status" value="1"/>
</dbReference>
<dbReference type="InterPro" id="IPR046357">
    <property type="entry name" value="PPIase_dom_sf"/>
</dbReference>
<dbReference type="InterPro" id="IPR001179">
    <property type="entry name" value="PPIase_FKBP_dom"/>
</dbReference>
<dbReference type="InterPro" id="IPR005215">
    <property type="entry name" value="Trig_fac"/>
</dbReference>
<dbReference type="InterPro" id="IPR008880">
    <property type="entry name" value="Trigger_fac_C"/>
</dbReference>
<dbReference type="InterPro" id="IPR037041">
    <property type="entry name" value="Trigger_fac_C_sf"/>
</dbReference>
<dbReference type="InterPro" id="IPR008881">
    <property type="entry name" value="Trigger_fac_ribosome-bd_bac"/>
</dbReference>
<dbReference type="InterPro" id="IPR036611">
    <property type="entry name" value="Trigger_fac_ribosome-bd_sf"/>
</dbReference>
<dbReference type="InterPro" id="IPR027304">
    <property type="entry name" value="Trigger_fact/SurA_dom_sf"/>
</dbReference>
<dbReference type="NCBIfam" id="TIGR00115">
    <property type="entry name" value="tig"/>
    <property type="match status" value="1"/>
</dbReference>
<dbReference type="PANTHER" id="PTHR30560">
    <property type="entry name" value="TRIGGER FACTOR CHAPERONE AND PEPTIDYL-PROLYL CIS/TRANS ISOMERASE"/>
    <property type="match status" value="1"/>
</dbReference>
<dbReference type="PANTHER" id="PTHR30560:SF3">
    <property type="entry name" value="TRIGGER FACTOR-LIKE PROTEIN TIG, CHLOROPLASTIC"/>
    <property type="match status" value="1"/>
</dbReference>
<dbReference type="Pfam" id="PF00254">
    <property type="entry name" value="FKBP_C"/>
    <property type="match status" value="1"/>
</dbReference>
<dbReference type="Pfam" id="PF05698">
    <property type="entry name" value="Trigger_C"/>
    <property type="match status" value="1"/>
</dbReference>
<dbReference type="Pfam" id="PF05697">
    <property type="entry name" value="Trigger_N"/>
    <property type="match status" value="1"/>
</dbReference>
<dbReference type="PIRSF" id="PIRSF003095">
    <property type="entry name" value="Trigger_factor"/>
    <property type="match status" value="1"/>
</dbReference>
<dbReference type="SUPFAM" id="SSF54534">
    <property type="entry name" value="FKBP-like"/>
    <property type="match status" value="1"/>
</dbReference>
<dbReference type="SUPFAM" id="SSF109998">
    <property type="entry name" value="Triger factor/SurA peptide-binding domain-like"/>
    <property type="match status" value="1"/>
</dbReference>
<dbReference type="SUPFAM" id="SSF102735">
    <property type="entry name" value="Trigger factor ribosome-binding domain"/>
    <property type="match status" value="1"/>
</dbReference>
<dbReference type="PROSITE" id="PS50059">
    <property type="entry name" value="FKBP_PPIASE"/>
    <property type="match status" value="1"/>
</dbReference>
<sequence length="428" mass="48351">MSAKWEKLEGNQGVLTVEVDAEKVNEGLDEAFKKVVKKVQIPGFRKGKIPRSLFEKRFGVESLYADALDILLPEAYAKAVEETGIEPVDRPEIDVEQMEKGKSLIFTAKVTVKPEVTLGEYKGLEVEKLDDTVTDEDVEQELKRLQERHAELVVKEEGTVENGDTVVIDFEGFVDGEAFEGGKAENYSLVIGSGTFIPGFEEQLIGMAAGEEKDIEVTFPEEYHAEQLAGKPAVFKIKLHEIKTKQLPALDDEFAKDVDEEVETLDALKEKIKERLTKEKKEEAEAALRDAVVQKATENAQMDIPEVMVKNETDRMIREFEQRLQMQGLNLDLYYQFSGQDEAALREQMKEEAEKRVRVTLTLEAIVKAENIDVTEEEVEKELQEMASLYNLSVDKLKELLGTLDGLKEDLKMRKAIDFLVENSKVVA</sequence>
<accession>B7GH24</accession>
<reference key="1">
    <citation type="journal article" date="2008" name="Genome Biol.">
        <title>Encapsulated in silica: genome, proteome and physiology of the thermophilic bacterium Anoxybacillus flavithermus WK1.</title>
        <authorList>
            <person name="Saw J.H."/>
            <person name="Mountain B.W."/>
            <person name="Feng L."/>
            <person name="Omelchenko M.V."/>
            <person name="Hou S."/>
            <person name="Saito J.A."/>
            <person name="Stott M.B."/>
            <person name="Li D."/>
            <person name="Zhao G."/>
            <person name="Wu J."/>
            <person name="Galperin M.Y."/>
            <person name="Koonin E.V."/>
            <person name="Makarova K.S."/>
            <person name="Wolf Y.I."/>
            <person name="Rigden D.J."/>
            <person name="Dunfield P.F."/>
            <person name="Wang L."/>
            <person name="Alam M."/>
        </authorList>
    </citation>
    <scope>NUCLEOTIDE SEQUENCE [LARGE SCALE GENOMIC DNA]</scope>
    <source>
        <strain>DSM 21510 / WK1</strain>
    </source>
</reference>
<gene>
    <name evidence="1" type="primary">tig</name>
    <name type="ordered locus">Aflv_0599</name>
</gene>
<keyword id="KW-0131">Cell cycle</keyword>
<keyword id="KW-0132">Cell division</keyword>
<keyword id="KW-0143">Chaperone</keyword>
<keyword id="KW-0963">Cytoplasm</keyword>
<keyword id="KW-0413">Isomerase</keyword>
<keyword id="KW-0697">Rotamase</keyword>
<name>TIG_ANOFW</name>
<comment type="function">
    <text evidence="1">Involved in protein export. Acts as a chaperone by maintaining the newly synthesized protein in an open conformation. Functions as a peptidyl-prolyl cis-trans isomerase.</text>
</comment>
<comment type="catalytic activity">
    <reaction evidence="1">
        <text>[protein]-peptidylproline (omega=180) = [protein]-peptidylproline (omega=0)</text>
        <dbReference type="Rhea" id="RHEA:16237"/>
        <dbReference type="Rhea" id="RHEA-COMP:10747"/>
        <dbReference type="Rhea" id="RHEA-COMP:10748"/>
        <dbReference type="ChEBI" id="CHEBI:83833"/>
        <dbReference type="ChEBI" id="CHEBI:83834"/>
        <dbReference type="EC" id="5.2.1.8"/>
    </reaction>
</comment>
<comment type="subcellular location">
    <subcellularLocation>
        <location>Cytoplasm</location>
    </subcellularLocation>
    <text evidence="1">About half TF is bound to the ribosome near the polypeptide exit tunnel while the other half is free in the cytoplasm.</text>
</comment>
<comment type="domain">
    <text evidence="1">Consists of 3 domains; the N-terminus binds the ribosome, the middle domain has PPIase activity, while the C-terminus has intrinsic chaperone activity on its own.</text>
</comment>
<comment type="similarity">
    <text evidence="1">Belongs to the FKBP-type PPIase family. Tig subfamily.</text>
</comment>
<feature type="chain" id="PRO_1000119507" description="Trigger factor">
    <location>
        <begin position="1"/>
        <end position="428"/>
    </location>
</feature>
<feature type="domain" description="PPIase FKBP-type" evidence="1">
    <location>
        <begin position="163"/>
        <end position="248"/>
    </location>
</feature>
<organism>
    <name type="scientific">Anoxybacillus flavithermus (strain DSM 21510 / WK1)</name>
    <dbReference type="NCBI Taxonomy" id="491915"/>
    <lineage>
        <taxon>Bacteria</taxon>
        <taxon>Bacillati</taxon>
        <taxon>Bacillota</taxon>
        <taxon>Bacilli</taxon>
        <taxon>Bacillales</taxon>
        <taxon>Anoxybacillaceae</taxon>
        <taxon>Anoxybacillus</taxon>
    </lineage>
</organism>
<protein>
    <recommendedName>
        <fullName evidence="1">Trigger factor</fullName>
        <shortName evidence="1">TF</shortName>
        <ecNumber evidence="1">5.2.1.8</ecNumber>
    </recommendedName>
    <alternativeName>
        <fullName evidence="1">PPIase</fullName>
    </alternativeName>
</protein>
<proteinExistence type="inferred from homology"/>